<proteinExistence type="inferred from homology"/>
<protein>
    <recommendedName>
        <fullName evidence="1">Holliday junction branch migration complex subunit RuvA</fullName>
    </recommendedName>
</protein>
<accession>Q9A3G7</accession>
<evidence type="ECO:0000255" key="1">
    <source>
        <dbReference type="HAMAP-Rule" id="MF_00031"/>
    </source>
</evidence>
<reference key="1">
    <citation type="journal article" date="2001" name="Proc. Natl. Acad. Sci. U.S.A.">
        <title>Complete genome sequence of Caulobacter crescentus.</title>
        <authorList>
            <person name="Nierman W.C."/>
            <person name="Feldblyum T.V."/>
            <person name="Laub M.T."/>
            <person name="Paulsen I.T."/>
            <person name="Nelson K.E."/>
            <person name="Eisen J.A."/>
            <person name="Heidelberg J.F."/>
            <person name="Alley M.R.K."/>
            <person name="Ohta N."/>
            <person name="Maddock J.R."/>
            <person name="Potocka I."/>
            <person name="Nelson W.C."/>
            <person name="Newton A."/>
            <person name="Stephens C."/>
            <person name="Phadke N.D."/>
            <person name="Ely B."/>
            <person name="DeBoy R.T."/>
            <person name="Dodson R.J."/>
            <person name="Durkin A.S."/>
            <person name="Gwinn M.L."/>
            <person name="Haft D.H."/>
            <person name="Kolonay J.F."/>
            <person name="Smit J."/>
            <person name="Craven M.B."/>
            <person name="Khouri H.M."/>
            <person name="Shetty J."/>
            <person name="Berry K.J."/>
            <person name="Utterback T.R."/>
            <person name="Tran K."/>
            <person name="Wolf A.M."/>
            <person name="Vamathevan J.J."/>
            <person name="Ermolaeva M.D."/>
            <person name="White O."/>
            <person name="Salzberg S.L."/>
            <person name="Venter J.C."/>
            <person name="Shapiro L."/>
            <person name="Fraser C.M."/>
        </authorList>
    </citation>
    <scope>NUCLEOTIDE SEQUENCE [LARGE SCALE GENOMIC DNA]</scope>
    <source>
        <strain>ATCC 19089 / CIP 103742 / CB 15</strain>
    </source>
</reference>
<organism>
    <name type="scientific">Caulobacter vibrioides (strain ATCC 19089 / CIP 103742 / CB 15)</name>
    <name type="common">Caulobacter crescentus</name>
    <dbReference type="NCBI Taxonomy" id="190650"/>
    <lineage>
        <taxon>Bacteria</taxon>
        <taxon>Pseudomonadati</taxon>
        <taxon>Pseudomonadota</taxon>
        <taxon>Alphaproteobacteria</taxon>
        <taxon>Caulobacterales</taxon>
        <taxon>Caulobacteraceae</taxon>
        <taxon>Caulobacter</taxon>
    </lineage>
</organism>
<keyword id="KW-0963">Cytoplasm</keyword>
<keyword id="KW-0227">DNA damage</keyword>
<keyword id="KW-0233">DNA recombination</keyword>
<keyword id="KW-0234">DNA repair</keyword>
<keyword id="KW-0238">DNA-binding</keyword>
<keyword id="KW-1185">Reference proteome</keyword>
<dbReference type="EMBL" id="AE005673">
    <property type="protein sequence ID" value="AAK25199.1"/>
    <property type="molecule type" value="Genomic_DNA"/>
</dbReference>
<dbReference type="PIR" id="C87650">
    <property type="entry name" value="C87650"/>
</dbReference>
<dbReference type="RefSeq" id="NP_422031.1">
    <property type="nucleotide sequence ID" value="NC_002696.2"/>
</dbReference>
<dbReference type="RefSeq" id="WP_010921070.1">
    <property type="nucleotide sequence ID" value="NC_002696.2"/>
</dbReference>
<dbReference type="SMR" id="Q9A3G7"/>
<dbReference type="STRING" id="190650.CC_3237"/>
<dbReference type="EnsemblBacteria" id="AAK25199">
    <property type="protein sequence ID" value="AAK25199"/>
    <property type="gene ID" value="CC_3237"/>
</dbReference>
<dbReference type="KEGG" id="ccr:CC_3237"/>
<dbReference type="PATRIC" id="fig|190650.5.peg.3243"/>
<dbReference type="eggNOG" id="COG0632">
    <property type="taxonomic scope" value="Bacteria"/>
</dbReference>
<dbReference type="HOGENOM" id="CLU_087936_3_0_5"/>
<dbReference type="BioCyc" id="CAULO:CC3237-MONOMER"/>
<dbReference type="Proteomes" id="UP000001816">
    <property type="component" value="Chromosome"/>
</dbReference>
<dbReference type="GO" id="GO:0005737">
    <property type="term" value="C:cytoplasm"/>
    <property type="evidence" value="ECO:0007669"/>
    <property type="project" value="UniProtKB-SubCell"/>
</dbReference>
<dbReference type="GO" id="GO:0009379">
    <property type="term" value="C:Holliday junction helicase complex"/>
    <property type="evidence" value="ECO:0007669"/>
    <property type="project" value="InterPro"/>
</dbReference>
<dbReference type="GO" id="GO:0048476">
    <property type="term" value="C:Holliday junction resolvase complex"/>
    <property type="evidence" value="ECO:0007669"/>
    <property type="project" value="UniProtKB-UniRule"/>
</dbReference>
<dbReference type="GO" id="GO:0005524">
    <property type="term" value="F:ATP binding"/>
    <property type="evidence" value="ECO:0007669"/>
    <property type="project" value="InterPro"/>
</dbReference>
<dbReference type="GO" id="GO:0000400">
    <property type="term" value="F:four-way junction DNA binding"/>
    <property type="evidence" value="ECO:0007669"/>
    <property type="project" value="UniProtKB-UniRule"/>
</dbReference>
<dbReference type="GO" id="GO:0009378">
    <property type="term" value="F:four-way junction helicase activity"/>
    <property type="evidence" value="ECO:0007669"/>
    <property type="project" value="InterPro"/>
</dbReference>
<dbReference type="GO" id="GO:0006310">
    <property type="term" value="P:DNA recombination"/>
    <property type="evidence" value="ECO:0007669"/>
    <property type="project" value="UniProtKB-UniRule"/>
</dbReference>
<dbReference type="GO" id="GO:0006281">
    <property type="term" value="P:DNA repair"/>
    <property type="evidence" value="ECO:0007669"/>
    <property type="project" value="UniProtKB-UniRule"/>
</dbReference>
<dbReference type="GO" id="GO:0009432">
    <property type="term" value="P:SOS response"/>
    <property type="evidence" value="ECO:0000269"/>
    <property type="project" value="CollecTF"/>
</dbReference>
<dbReference type="FunFam" id="1.10.8.10:FF:000221">
    <property type="entry name" value="Holliday junction ATP-dependent DNA helicase RuvA"/>
    <property type="match status" value="1"/>
</dbReference>
<dbReference type="Gene3D" id="1.10.150.20">
    <property type="entry name" value="5' to 3' exonuclease, C-terminal subdomain"/>
    <property type="match status" value="1"/>
</dbReference>
<dbReference type="Gene3D" id="1.10.8.10">
    <property type="entry name" value="DNA helicase RuvA subunit, C-terminal domain"/>
    <property type="match status" value="1"/>
</dbReference>
<dbReference type="Gene3D" id="2.40.50.140">
    <property type="entry name" value="Nucleic acid-binding proteins"/>
    <property type="match status" value="1"/>
</dbReference>
<dbReference type="HAMAP" id="MF_00031">
    <property type="entry name" value="DNA_HJ_migration_RuvA"/>
    <property type="match status" value="1"/>
</dbReference>
<dbReference type="InterPro" id="IPR013849">
    <property type="entry name" value="DNA_helicase_Holl-junc_RuvA_I"/>
</dbReference>
<dbReference type="InterPro" id="IPR012340">
    <property type="entry name" value="NA-bd_OB-fold"/>
</dbReference>
<dbReference type="InterPro" id="IPR000085">
    <property type="entry name" value="RuvA"/>
</dbReference>
<dbReference type="InterPro" id="IPR010994">
    <property type="entry name" value="RuvA_2-like"/>
</dbReference>
<dbReference type="InterPro" id="IPR011114">
    <property type="entry name" value="RuvA_C"/>
</dbReference>
<dbReference type="InterPro" id="IPR036267">
    <property type="entry name" value="RuvA_C_sf"/>
</dbReference>
<dbReference type="NCBIfam" id="TIGR00084">
    <property type="entry name" value="ruvA"/>
    <property type="match status" value="1"/>
</dbReference>
<dbReference type="Pfam" id="PF14520">
    <property type="entry name" value="HHH_5"/>
    <property type="match status" value="1"/>
</dbReference>
<dbReference type="Pfam" id="PF07499">
    <property type="entry name" value="RuvA_C"/>
    <property type="match status" value="1"/>
</dbReference>
<dbReference type="Pfam" id="PF01330">
    <property type="entry name" value="RuvA_N"/>
    <property type="match status" value="1"/>
</dbReference>
<dbReference type="SUPFAM" id="SSF46929">
    <property type="entry name" value="DNA helicase RuvA subunit, C-terminal domain"/>
    <property type="match status" value="1"/>
</dbReference>
<dbReference type="SUPFAM" id="SSF50249">
    <property type="entry name" value="Nucleic acid-binding proteins"/>
    <property type="match status" value="1"/>
</dbReference>
<dbReference type="SUPFAM" id="SSF47781">
    <property type="entry name" value="RuvA domain 2-like"/>
    <property type="match status" value="1"/>
</dbReference>
<comment type="function">
    <text evidence="1">The RuvA-RuvB-RuvC complex processes Holliday junction (HJ) DNA during genetic recombination and DNA repair, while the RuvA-RuvB complex plays an important role in the rescue of blocked DNA replication forks via replication fork reversal (RFR). RuvA specifically binds to HJ cruciform DNA, conferring on it an open structure. The RuvB hexamer acts as an ATP-dependent pump, pulling dsDNA into and through the RuvAB complex. HJ branch migration allows RuvC to scan DNA until it finds its consensus sequence, where it cleaves and resolves the cruciform DNA.</text>
</comment>
<comment type="subunit">
    <text evidence="1">Homotetramer. Forms an RuvA(8)-RuvB(12)-Holliday junction (HJ) complex. HJ DNA is sandwiched between 2 RuvA tetramers; dsDNA enters through RuvA and exits via RuvB. An RuvB hexamer assembles on each DNA strand where it exits the tetramer. Each RuvB hexamer is contacted by two RuvA subunits (via domain III) on 2 adjacent RuvB subunits; this complex drives branch migration. In the full resolvosome a probable DNA-RuvA(4)-RuvB(12)-RuvC(2) complex forms which resolves the HJ.</text>
</comment>
<comment type="subcellular location">
    <subcellularLocation>
        <location evidence="1">Cytoplasm</location>
    </subcellularLocation>
</comment>
<comment type="domain">
    <text evidence="1">Has three domains with a flexible linker between the domains II and III and assumes an 'L' shape. Domain III is highly mobile and contacts RuvB.</text>
</comment>
<comment type="similarity">
    <text evidence="1">Belongs to the RuvA family.</text>
</comment>
<sequence>MIGRLRGAVAEVGEEEALIDVMGVGYLVRCGHRTLQRLPALGEETLLHIESQWSESAGLRLYGFLTREDRRAFVLLQAIQGVGPKAAMAVLDVLSPAELASAVAREDKAAVGRANGVGPKLALRIVTELKDKPITDGPVLMSAPTSSAPSAPAKPAPTGDAVAALMGLGVAEVNARRVVEAAAAELGEEATVQALIKAGLKELGR</sequence>
<name>RUVA_CAUVC</name>
<gene>
    <name evidence="1" type="primary">ruvA</name>
    <name type="ordered locus">CC_3237</name>
</gene>
<feature type="chain" id="PRO_0000094614" description="Holliday junction branch migration complex subunit RuvA">
    <location>
        <begin position="1"/>
        <end position="205"/>
    </location>
</feature>
<feature type="region of interest" description="Domain I" evidence="1">
    <location>
        <begin position="1"/>
        <end position="65"/>
    </location>
</feature>
<feature type="region of interest" description="Domain II" evidence="1">
    <location>
        <begin position="66"/>
        <end position="144"/>
    </location>
</feature>
<feature type="region of interest" description="Flexible linker" evidence="1">
    <location>
        <begin position="145"/>
        <end position="153"/>
    </location>
</feature>
<feature type="region of interest" description="Domain III" evidence="1">
    <location>
        <begin position="153"/>
        <end position="205"/>
    </location>
</feature>